<proteinExistence type="evidence at transcript level"/>
<accession>Q6DGF8</accession>
<evidence type="ECO:0000250" key="1"/>
<evidence type="ECO:0000250" key="2">
    <source>
        <dbReference type="UniProtKB" id="Q96B42"/>
    </source>
</evidence>
<evidence type="ECO:0000255" key="3"/>
<evidence type="ECO:0000269" key="4">
    <source>
    </source>
</evidence>
<evidence type="ECO:0000305" key="5"/>
<organism>
    <name type="scientific">Rattus norvegicus</name>
    <name type="common">Rat</name>
    <dbReference type="NCBI Taxonomy" id="10116"/>
    <lineage>
        <taxon>Eukaryota</taxon>
        <taxon>Metazoa</taxon>
        <taxon>Chordata</taxon>
        <taxon>Craniata</taxon>
        <taxon>Vertebrata</taxon>
        <taxon>Euteleostomi</taxon>
        <taxon>Mammalia</taxon>
        <taxon>Eutheria</taxon>
        <taxon>Euarchontoglires</taxon>
        <taxon>Glires</taxon>
        <taxon>Rodentia</taxon>
        <taxon>Myomorpha</taxon>
        <taxon>Muroidea</taxon>
        <taxon>Muridae</taxon>
        <taxon>Murinae</taxon>
        <taxon>Rattus</taxon>
    </lineage>
</organism>
<sequence>MASPYSVRVFPVSIPAVIMETDWTEPWLLGLLAFHLLCLLLTCFSAQRYKLQIGHFLCLVVLVYCAEYINEVAAMNWRLFAKYQYFDSRGMFISLVFSAPLLFNAMVIVIMWVRKTLTVMSDLKNLQERRKERKRRRKEE</sequence>
<reference key="1">
    <citation type="journal article" date="2004" name="Genome Res.">
        <title>The status, quality, and expansion of the NIH full-length cDNA project: the Mammalian Gene Collection (MGC).</title>
        <authorList>
            <consortium name="The MGC Project Team"/>
        </authorList>
    </citation>
    <scope>NUCLEOTIDE SEQUENCE [LARGE SCALE MRNA]</scope>
    <source>
        <tissue>Kidney</tissue>
    </source>
</reference>
<reference key="2">
    <citation type="journal article" date="2008" name="Cancer Res.">
        <title>Transmembrane protein 18 enhances the tropism of neural stem cells for glioma cells.</title>
        <authorList>
            <person name="Jurvansuu J."/>
            <person name="Zhao Y."/>
            <person name="Leung D.S."/>
            <person name="Boulaire J."/>
            <person name="Yu Y.H."/>
            <person name="Ahmed S."/>
            <person name="Wang S."/>
        </authorList>
    </citation>
    <scope>FUNCTION</scope>
</reference>
<keyword id="KW-0175">Coiled coil</keyword>
<keyword id="KW-0963">Cytoplasm</keyword>
<keyword id="KW-0238">DNA-binding</keyword>
<keyword id="KW-0472">Membrane</keyword>
<keyword id="KW-0539">Nucleus</keyword>
<keyword id="KW-1185">Reference proteome</keyword>
<keyword id="KW-0804">Transcription</keyword>
<keyword id="KW-0812">Transmembrane</keyword>
<keyword id="KW-1133">Transmembrane helix</keyword>
<dbReference type="EMBL" id="BC076388">
    <property type="protein sequence ID" value="AAH76388.1"/>
    <property type="molecule type" value="mRNA"/>
</dbReference>
<dbReference type="RefSeq" id="NP_001007749.1">
    <property type="nucleotide sequence ID" value="NM_001007748.1"/>
</dbReference>
<dbReference type="FunCoup" id="Q6DGF8">
    <property type="interactions" value="2372"/>
</dbReference>
<dbReference type="STRING" id="10116.ENSRNOP00000073671"/>
<dbReference type="PhosphoSitePlus" id="Q6DGF8"/>
<dbReference type="PaxDb" id="10116-ENSRNOP00000006836"/>
<dbReference type="Ensembl" id="ENSRNOT00000006836.6">
    <property type="protein sequence ID" value="ENSRNOP00000006836.3"/>
    <property type="gene ID" value="ENSRNOG00000005144.6"/>
</dbReference>
<dbReference type="GeneID" id="362722"/>
<dbReference type="KEGG" id="rno:362722"/>
<dbReference type="UCSC" id="RGD:1359389">
    <property type="organism name" value="rat"/>
</dbReference>
<dbReference type="AGR" id="RGD:1359389"/>
<dbReference type="CTD" id="129787"/>
<dbReference type="RGD" id="1359389">
    <property type="gene designation" value="Tmem18"/>
</dbReference>
<dbReference type="eggNOG" id="ENOG502RZ4T">
    <property type="taxonomic scope" value="Eukaryota"/>
</dbReference>
<dbReference type="GeneTree" id="ENSGT00390000015191"/>
<dbReference type="HOGENOM" id="CLU_101161_1_1_1"/>
<dbReference type="InParanoid" id="Q6DGF8"/>
<dbReference type="OrthoDB" id="68106at9989"/>
<dbReference type="PhylomeDB" id="Q6DGF8"/>
<dbReference type="TreeFam" id="TF324883"/>
<dbReference type="PRO" id="PR:Q6DGF8"/>
<dbReference type="Proteomes" id="UP000002494">
    <property type="component" value="Chromosome 6"/>
</dbReference>
<dbReference type="Bgee" id="ENSRNOG00000005144">
    <property type="expression patterns" value="Expressed in stomach and 19 other cell types or tissues"/>
</dbReference>
<dbReference type="GO" id="GO:0005737">
    <property type="term" value="C:cytoplasm"/>
    <property type="evidence" value="ECO:0007669"/>
    <property type="project" value="UniProtKB-SubCell"/>
</dbReference>
<dbReference type="GO" id="GO:0031965">
    <property type="term" value="C:nuclear membrane"/>
    <property type="evidence" value="ECO:0000250"/>
    <property type="project" value="UniProtKB"/>
</dbReference>
<dbReference type="GO" id="GO:0003677">
    <property type="term" value="F:DNA binding"/>
    <property type="evidence" value="ECO:0007669"/>
    <property type="project" value="UniProtKB-KW"/>
</dbReference>
<dbReference type="GO" id="GO:0016477">
    <property type="term" value="P:cell migration"/>
    <property type="evidence" value="ECO:0000314"/>
    <property type="project" value="UniProtKB"/>
</dbReference>
<dbReference type="GO" id="GO:0042755">
    <property type="term" value="P:eating behavior"/>
    <property type="evidence" value="ECO:0000266"/>
    <property type="project" value="RGD"/>
</dbReference>
<dbReference type="GO" id="GO:0097009">
    <property type="term" value="P:energy homeostasis"/>
    <property type="evidence" value="ECO:0000266"/>
    <property type="project" value="RGD"/>
</dbReference>
<dbReference type="InterPro" id="IPR026721">
    <property type="entry name" value="TMEM18"/>
</dbReference>
<dbReference type="PANTHER" id="PTHR22593">
    <property type="entry name" value="TRANSMEMBRANE PROTEIN 18"/>
    <property type="match status" value="1"/>
</dbReference>
<dbReference type="PANTHER" id="PTHR22593:SF2">
    <property type="entry name" value="TRANSMEMBRANE PROTEIN 18"/>
    <property type="match status" value="1"/>
</dbReference>
<dbReference type="Pfam" id="PF14770">
    <property type="entry name" value="TMEM18"/>
    <property type="match status" value="1"/>
</dbReference>
<gene>
    <name type="primary">Tmem18</name>
</gene>
<protein>
    <recommendedName>
        <fullName>Transmembrane protein 18</fullName>
    </recommendedName>
</protein>
<name>TMM18_RAT</name>
<comment type="function">
    <text evidence="1 4">Transcription repressor. Sequence-specific ssDNA and dsDNA binding protein, with preference for GCT end CTG repeats (By similarity). Cell migration modulator which enhances the glioma-specific migration ability of neural stem cells (NSC) and neural precursor cells (NPC).</text>
</comment>
<comment type="subunit">
    <text evidence="1">Forms homooligomers, independently of the DNA-binding domain.</text>
</comment>
<comment type="subcellular location">
    <subcellularLocation>
        <location evidence="2">Cytoplasm</location>
    </subcellularLocation>
    <subcellularLocation>
        <location evidence="2">Nucleus membrane</location>
        <topology evidence="3">Multi-pass membrane protein</topology>
    </subcellularLocation>
</comment>
<comment type="similarity">
    <text evidence="5">Belongs to the TMEM18 family.</text>
</comment>
<feature type="chain" id="PRO_0000284371" description="Transmembrane protein 18">
    <location>
        <begin position="1"/>
        <end position="140"/>
    </location>
</feature>
<feature type="topological domain" description="Perinuclear space" evidence="3">
    <location>
        <begin position="1"/>
        <end position="25"/>
    </location>
</feature>
<feature type="transmembrane region" description="Helical" evidence="3">
    <location>
        <begin position="26"/>
        <end position="46"/>
    </location>
</feature>
<feature type="topological domain" description="Nuclear" evidence="3">
    <location>
        <begin position="47"/>
        <end position="52"/>
    </location>
</feature>
<feature type="transmembrane region" description="Helical" evidence="3">
    <location>
        <begin position="53"/>
        <end position="73"/>
    </location>
</feature>
<feature type="topological domain" description="Perinuclear space" evidence="3">
    <location>
        <begin position="74"/>
        <end position="91"/>
    </location>
</feature>
<feature type="transmembrane region" description="Helical" evidence="3">
    <location>
        <begin position="92"/>
        <end position="112"/>
    </location>
</feature>
<feature type="topological domain" description="Nuclear" evidence="3">
    <location>
        <begin position="113"/>
        <end position="140"/>
    </location>
</feature>
<feature type="region of interest" description="DNA-binding" evidence="1">
    <location>
        <begin position="113"/>
        <end position="140"/>
    </location>
</feature>
<feature type="coiled-coil region" evidence="3">
    <location>
        <begin position="117"/>
        <end position="140"/>
    </location>
</feature>
<feature type="short sequence motif" description="Nuclear localization signal" evidence="1">
    <location>
        <begin position="130"/>
        <end position="138"/>
    </location>
</feature>